<accession>Q58612</accession>
<protein>
    <recommendedName>
        <fullName>Putative protein adenylyltransferase MJ1215</fullName>
        <ecNumber evidence="1">2.7.7.108</ecNumber>
    </recommendedName>
    <alternativeName>
        <fullName>Putative antitoxin MJ1215</fullName>
    </alternativeName>
</protein>
<proteinExistence type="inferred from homology"/>
<organism>
    <name type="scientific">Methanocaldococcus jannaschii (strain ATCC 43067 / DSM 2661 / JAL-1 / JCM 10045 / NBRC 100440)</name>
    <name type="common">Methanococcus jannaschii</name>
    <dbReference type="NCBI Taxonomy" id="243232"/>
    <lineage>
        <taxon>Archaea</taxon>
        <taxon>Methanobacteriati</taxon>
        <taxon>Methanobacteriota</taxon>
        <taxon>Methanomada group</taxon>
        <taxon>Methanococci</taxon>
        <taxon>Methanococcales</taxon>
        <taxon>Methanocaldococcaceae</taxon>
        <taxon>Methanocaldococcus</taxon>
    </lineage>
</organism>
<dbReference type="EC" id="2.7.7.108" evidence="1"/>
<dbReference type="EMBL" id="L77117">
    <property type="protein sequence ID" value="AAB99216.1"/>
    <property type="molecule type" value="Genomic_DNA"/>
</dbReference>
<dbReference type="PIR" id="F64451">
    <property type="entry name" value="F64451"/>
</dbReference>
<dbReference type="SMR" id="Q58612"/>
<dbReference type="STRING" id="243232.MJ_1215"/>
<dbReference type="PaxDb" id="243232-MJ_1215"/>
<dbReference type="EnsemblBacteria" id="AAB99216">
    <property type="protein sequence ID" value="AAB99216"/>
    <property type="gene ID" value="MJ_1215"/>
</dbReference>
<dbReference type="KEGG" id="mja:MJ_1215"/>
<dbReference type="eggNOG" id="arCOG01206">
    <property type="taxonomic scope" value="Archaea"/>
</dbReference>
<dbReference type="HOGENOM" id="CLU_130257_10_3_2"/>
<dbReference type="InParanoid" id="Q58612"/>
<dbReference type="PhylomeDB" id="Q58612"/>
<dbReference type="Proteomes" id="UP000000805">
    <property type="component" value="Chromosome"/>
</dbReference>
<dbReference type="GO" id="GO:0005524">
    <property type="term" value="F:ATP binding"/>
    <property type="evidence" value="ECO:0007669"/>
    <property type="project" value="UniProtKB-KW"/>
</dbReference>
<dbReference type="GO" id="GO:0046872">
    <property type="term" value="F:metal ion binding"/>
    <property type="evidence" value="ECO:0007669"/>
    <property type="project" value="UniProtKB-KW"/>
</dbReference>
<dbReference type="GO" id="GO:0016779">
    <property type="term" value="F:nucleotidyltransferase activity"/>
    <property type="evidence" value="ECO:0007669"/>
    <property type="project" value="UniProtKB-KW"/>
</dbReference>
<dbReference type="CDD" id="cd05403">
    <property type="entry name" value="NT_KNTase_like"/>
    <property type="match status" value="1"/>
</dbReference>
<dbReference type="Gene3D" id="3.30.460.10">
    <property type="entry name" value="Beta Polymerase, domain 2"/>
    <property type="match status" value="1"/>
</dbReference>
<dbReference type="InterPro" id="IPR043519">
    <property type="entry name" value="NT_sf"/>
</dbReference>
<dbReference type="InterPro" id="IPR002934">
    <property type="entry name" value="Polymerase_NTP_transf_dom"/>
</dbReference>
<dbReference type="InterPro" id="IPR052038">
    <property type="entry name" value="Type-VII_TA_antitoxin"/>
</dbReference>
<dbReference type="PANTHER" id="PTHR33571:SF19">
    <property type="entry name" value="PROTEIN ADENYLYLTRANSFERASE MJ0128-RELATED"/>
    <property type="match status" value="1"/>
</dbReference>
<dbReference type="PANTHER" id="PTHR33571">
    <property type="entry name" value="SSL8005 PROTEIN"/>
    <property type="match status" value="1"/>
</dbReference>
<dbReference type="Pfam" id="PF01909">
    <property type="entry name" value="NTP_transf_2"/>
    <property type="match status" value="1"/>
</dbReference>
<dbReference type="SUPFAM" id="SSF81301">
    <property type="entry name" value="Nucleotidyltransferase"/>
    <property type="match status" value="1"/>
</dbReference>
<keyword id="KW-0067">ATP-binding</keyword>
<keyword id="KW-0460">Magnesium</keyword>
<keyword id="KW-0479">Metal-binding</keyword>
<keyword id="KW-0547">Nucleotide-binding</keyword>
<keyword id="KW-0548">Nucleotidyltransferase</keyword>
<keyword id="KW-1185">Reference proteome</keyword>
<keyword id="KW-1277">Toxin-antitoxin system</keyword>
<keyword id="KW-0808">Transferase</keyword>
<name>Y1215_METJA</name>
<evidence type="ECO:0000250" key="1">
    <source>
        <dbReference type="UniProtKB" id="A0A0B0QJN8"/>
    </source>
</evidence>
<evidence type="ECO:0000250" key="2">
    <source>
        <dbReference type="UniProtKB" id="Q8ECH7"/>
    </source>
</evidence>
<evidence type="ECO:0000305" key="3"/>
<sequence length="86" mass="10281">MRGRMKTLSEIKEILRKHKKELKENYKVKSIAIFGSYARGEQKETSDIDIMVEFYETPDYLKFFELEDYLENILNIKVDLITKNSI</sequence>
<feature type="chain" id="PRO_0000107218" description="Putative protein adenylyltransferase MJ1215">
    <location>
        <begin position="1"/>
        <end position="86"/>
    </location>
</feature>
<feature type="short sequence motif" description="GSX(10)DXD motif" evidence="2">
    <location>
        <begin position="35"/>
        <end position="49"/>
    </location>
</feature>
<feature type="binding site" evidence="2">
    <location>
        <position position="47"/>
    </location>
    <ligand>
        <name>Mg(2+)</name>
        <dbReference type="ChEBI" id="CHEBI:18420"/>
        <label>1</label>
    </ligand>
</feature>
<feature type="binding site" evidence="2">
    <location>
        <position position="47"/>
    </location>
    <ligand>
        <name>Mg(2+)</name>
        <dbReference type="ChEBI" id="CHEBI:18420"/>
        <label>2</label>
    </ligand>
</feature>
<feature type="binding site" evidence="2">
    <location>
        <position position="49"/>
    </location>
    <ligand>
        <name>Mg(2+)</name>
        <dbReference type="ChEBI" id="CHEBI:18420"/>
        <label>1</label>
    </ligand>
</feature>
<feature type="binding site" evidence="2">
    <location>
        <position position="49"/>
    </location>
    <ligand>
        <name>Mg(2+)</name>
        <dbReference type="ChEBI" id="CHEBI:18420"/>
        <label>2</label>
    </ligand>
</feature>
<feature type="binding site" evidence="2">
    <location>
        <position position="79"/>
    </location>
    <ligand>
        <name>Mg(2+)</name>
        <dbReference type="ChEBI" id="CHEBI:18420"/>
        <label>1</label>
    </ligand>
</feature>
<gene>
    <name type="ordered locus">MJ1215</name>
</gene>
<reference key="1">
    <citation type="journal article" date="1996" name="Science">
        <title>Complete genome sequence of the methanogenic archaeon, Methanococcus jannaschii.</title>
        <authorList>
            <person name="Bult C.J."/>
            <person name="White O."/>
            <person name="Olsen G.J."/>
            <person name="Zhou L."/>
            <person name="Fleischmann R.D."/>
            <person name="Sutton G.G."/>
            <person name="Blake J.A."/>
            <person name="FitzGerald L.M."/>
            <person name="Clayton R.A."/>
            <person name="Gocayne J.D."/>
            <person name="Kerlavage A.R."/>
            <person name="Dougherty B.A."/>
            <person name="Tomb J.-F."/>
            <person name="Adams M.D."/>
            <person name="Reich C.I."/>
            <person name="Overbeek R."/>
            <person name="Kirkness E.F."/>
            <person name="Weinstock K.G."/>
            <person name="Merrick J.M."/>
            <person name="Glodek A."/>
            <person name="Scott J.L."/>
            <person name="Geoghagen N.S.M."/>
            <person name="Weidman J.F."/>
            <person name="Fuhrmann J.L."/>
            <person name="Nguyen D."/>
            <person name="Utterback T.R."/>
            <person name="Kelley J.M."/>
            <person name="Peterson J.D."/>
            <person name="Sadow P.W."/>
            <person name="Hanna M.C."/>
            <person name="Cotton M.D."/>
            <person name="Roberts K.M."/>
            <person name="Hurst M.A."/>
            <person name="Kaine B.P."/>
            <person name="Borodovsky M."/>
            <person name="Klenk H.-P."/>
            <person name="Fraser C.M."/>
            <person name="Smith H.O."/>
            <person name="Woese C.R."/>
            <person name="Venter J.C."/>
        </authorList>
    </citation>
    <scope>NUCLEOTIDE SEQUENCE [LARGE SCALE GENOMIC DNA]</scope>
    <source>
        <strain>ATCC 43067 / DSM 2661 / JAL-1 / JCM 10045 / NBRC 100440</strain>
    </source>
</reference>
<comment type="function">
    <text evidence="2">Probable antitoxin component of a putative type VII toxin-antitoxin (TA) system. Neutralizes cognate toxic MJ1216 by di-AMPylation.</text>
</comment>
<comment type="catalytic activity">
    <reaction evidence="2">
        <text>L-tyrosyl-[protein] + ATP = O-(5'-adenylyl)-L-tyrosyl-[protein] + diphosphate</text>
        <dbReference type="Rhea" id="RHEA:54288"/>
        <dbReference type="Rhea" id="RHEA-COMP:10136"/>
        <dbReference type="Rhea" id="RHEA-COMP:13846"/>
        <dbReference type="ChEBI" id="CHEBI:30616"/>
        <dbReference type="ChEBI" id="CHEBI:33019"/>
        <dbReference type="ChEBI" id="CHEBI:46858"/>
        <dbReference type="ChEBI" id="CHEBI:83624"/>
        <dbReference type="EC" id="2.7.7.108"/>
    </reaction>
</comment>
<comment type="catalytic activity">
    <reaction evidence="2">
        <text>O-(5'-adenylyl)-L-tyrosyl-[protein] + ATP = O-[5'-(adenylyl-(5'-&gt;3')-adenylyl)]-L-tyrosyl-[protein] + diphosphate</text>
        <dbReference type="Rhea" id="RHEA:66528"/>
        <dbReference type="Rhea" id="RHEA-COMP:13846"/>
        <dbReference type="Rhea" id="RHEA-COMP:17046"/>
        <dbReference type="ChEBI" id="CHEBI:30616"/>
        <dbReference type="ChEBI" id="CHEBI:33019"/>
        <dbReference type="ChEBI" id="CHEBI:83624"/>
        <dbReference type="ChEBI" id="CHEBI:167160"/>
    </reaction>
</comment>
<comment type="cofactor">
    <cofactor evidence="2">
        <name>Mg(2+)</name>
        <dbReference type="ChEBI" id="CHEBI:18420"/>
    </cofactor>
    <text evidence="2">Binds 2 Mg(2+) ions.</text>
</comment>
<comment type="subunit">
    <text evidence="2">Probably forms a complex with cognate toxin MJ1216.</text>
</comment>
<comment type="similarity">
    <text evidence="3">Belongs to the MntA antitoxin family.</text>
</comment>